<dbReference type="EC" id="3.1.2.-" evidence="2"/>
<dbReference type="EC" id="3.1.2.22" evidence="2"/>
<dbReference type="EMBL" id="CR382127">
    <property type="protein sequence ID" value="CAG84130.1"/>
    <property type="molecule type" value="Genomic_DNA"/>
</dbReference>
<dbReference type="RefSeq" id="XP_500198.1">
    <property type="nucleotide sequence ID" value="XM_500198.1"/>
</dbReference>
<dbReference type="SMR" id="Q6CGL4"/>
<dbReference type="FunCoup" id="Q6CGL4">
    <property type="interactions" value="510"/>
</dbReference>
<dbReference type="STRING" id="284591.Q6CGL4"/>
<dbReference type="ESTHER" id="yarli-apth1">
    <property type="family name" value="LYsophospholipase_carboxylesterase"/>
</dbReference>
<dbReference type="EnsemblFungi" id="CAG84130">
    <property type="protein sequence ID" value="CAG84130"/>
    <property type="gene ID" value="YALI0_A18337g"/>
</dbReference>
<dbReference type="KEGG" id="yli:2906144"/>
<dbReference type="VEuPathDB" id="FungiDB:YALI0_A18337g"/>
<dbReference type="HOGENOM" id="CLU_049413_3_8_1"/>
<dbReference type="InParanoid" id="Q6CGL4"/>
<dbReference type="OMA" id="WYDILAM"/>
<dbReference type="OrthoDB" id="63009at4891"/>
<dbReference type="Proteomes" id="UP000001300">
    <property type="component" value="Chromosome A"/>
</dbReference>
<dbReference type="GO" id="GO:0005737">
    <property type="term" value="C:cytoplasm"/>
    <property type="evidence" value="ECO:0000318"/>
    <property type="project" value="GO_Central"/>
</dbReference>
<dbReference type="GO" id="GO:0005634">
    <property type="term" value="C:nucleus"/>
    <property type="evidence" value="ECO:0007669"/>
    <property type="project" value="UniProtKB-SubCell"/>
</dbReference>
<dbReference type="GO" id="GO:0052689">
    <property type="term" value="F:carboxylic ester hydrolase activity"/>
    <property type="evidence" value="ECO:0000318"/>
    <property type="project" value="GO_Central"/>
</dbReference>
<dbReference type="GO" id="GO:0008474">
    <property type="term" value="F:palmitoyl-(protein) hydrolase activity"/>
    <property type="evidence" value="ECO:0000318"/>
    <property type="project" value="GO_Central"/>
</dbReference>
<dbReference type="GO" id="GO:0006631">
    <property type="term" value="P:fatty acid metabolic process"/>
    <property type="evidence" value="ECO:0007669"/>
    <property type="project" value="UniProtKB-KW"/>
</dbReference>
<dbReference type="FunFam" id="3.40.50.1820:FF:000276">
    <property type="entry name" value="Acyl-protein thioesterase 1"/>
    <property type="match status" value="1"/>
</dbReference>
<dbReference type="Gene3D" id="3.40.50.1820">
    <property type="entry name" value="alpha/beta hydrolase"/>
    <property type="match status" value="1"/>
</dbReference>
<dbReference type="InterPro" id="IPR029058">
    <property type="entry name" value="AB_hydrolase_fold"/>
</dbReference>
<dbReference type="InterPro" id="IPR050565">
    <property type="entry name" value="LYPA1-2/EST-like"/>
</dbReference>
<dbReference type="InterPro" id="IPR003140">
    <property type="entry name" value="PLipase/COase/thioEstase"/>
</dbReference>
<dbReference type="PANTHER" id="PTHR10655:SF17">
    <property type="entry name" value="LYSOPHOSPHOLIPASE-LIKE PROTEIN 1"/>
    <property type="match status" value="1"/>
</dbReference>
<dbReference type="PANTHER" id="PTHR10655">
    <property type="entry name" value="LYSOPHOSPHOLIPASE-RELATED"/>
    <property type="match status" value="1"/>
</dbReference>
<dbReference type="Pfam" id="PF02230">
    <property type="entry name" value="Abhydrolase_2"/>
    <property type="match status" value="1"/>
</dbReference>
<dbReference type="SUPFAM" id="SSF53474">
    <property type="entry name" value="alpha/beta-Hydrolases"/>
    <property type="match status" value="1"/>
</dbReference>
<proteinExistence type="inferred from homology"/>
<organism>
    <name type="scientific">Yarrowia lipolytica (strain CLIB 122 / E 150)</name>
    <name type="common">Yeast</name>
    <name type="synonym">Candida lipolytica</name>
    <dbReference type="NCBI Taxonomy" id="284591"/>
    <lineage>
        <taxon>Eukaryota</taxon>
        <taxon>Fungi</taxon>
        <taxon>Dikarya</taxon>
        <taxon>Ascomycota</taxon>
        <taxon>Saccharomycotina</taxon>
        <taxon>Dipodascomycetes</taxon>
        <taxon>Dipodascales</taxon>
        <taxon>Dipodascales incertae sedis</taxon>
        <taxon>Yarrowia</taxon>
    </lineage>
</organism>
<keyword id="KW-0963">Cytoplasm</keyword>
<keyword id="KW-0276">Fatty acid metabolism</keyword>
<keyword id="KW-0378">Hydrolase</keyword>
<keyword id="KW-0443">Lipid metabolism</keyword>
<keyword id="KW-0539">Nucleus</keyword>
<keyword id="KW-1185">Reference proteome</keyword>
<keyword id="KW-0719">Serine esterase</keyword>
<sequence length="227" mass="25135">MPPYPAVRIPAKAAHTATVIFLHGLGDSGAGWMFLAEEARKAQRLNHVKFIFPEAPQQPVSLNFGMRMPSWYDIKELANVNAAQDQEGILESVGRLESLIKEETDAGVPANRIVIGGFSQGCAVSLATGCLTQTKLGGIVGLSGYVPIKDYILSQHNTTNQDTPMFLAHGTADQVIRFDYGKLSRDFIINELKFKNVDWHQYEGLTHSCGFEEISDILNWLEENIKE</sequence>
<accession>Q6CGL4</accession>
<gene>
    <name type="ordered locus">YALI0A18337g</name>
</gene>
<protein>
    <recommendedName>
        <fullName>Acyl-protein thioesterase 1</fullName>
        <ecNumber evidence="2">3.1.2.-</ecNumber>
    </recommendedName>
    <alternativeName>
        <fullName>Palmitoyl-protein hydrolase</fullName>
        <ecNumber evidence="2">3.1.2.22</ecNumber>
    </alternativeName>
</protein>
<reference key="1">
    <citation type="journal article" date="2004" name="Nature">
        <title>Genome evolution in yeasts.</title>
        <authorList>
            <person name="Dujon B."/>
            <person name="Sherman D."/>
            <person name="Fischer G."/>
            <person name="Durrens P."/>
            <person name="Casaregola S."/>
            <person name="Lafontaine I."/>
            <person name="de Montigny J."/>
            <person name="Marck C."/>
            <person name="Neuveglise C."/>
            <person name="Talla E."/>
            <person name="Goffard N."/>
            <person name="Frangeul L."/>
            <person name="Aigle M."/>
            <person name="Anthouard V."/>
            <person name="Babour A."/>
            <person name="Barbe V."/>
            <person name="Barnay S."/>
            <person name="Blanchin S."/>
            <person name="Beckerich J.-M."/>
            <person name="Beyne E."/>
            <person name="Bleykasten C."/>
            <person name="Boisrame A."/>
            <person name="Boyer J."/>
            <person name="Cattolico L."/>
            <person name="Confanioleri F."/>
            <person name="de Daruvar A."/>
            <person name="Despons L."/>
            <person name="Fabre E."/>
            <person name="Fairhead C."/>
            <person name="Ferry-Dumazet H."/>
            <person name="Groppi A."/>
            <person name="Hantraye F."/>
            <person name="Hennequin C."/>
            <person name="Jauniaux N."/>
            <person name="Joyet P."/>
            <person name="Kachouri R."/>
            <person name="Kerrest A."/>
            <person name="Koszul R."/>
            <person name="Lemaire M."/>
            <person name="Lesur I."/>
            <person name="Ma L."/>
            <person name="Muller H."/>
            <person name="Nicaud J.-M."/>
            <person name="Nikolski M."/>
            <person name="Oztas S."/>
            <person name="Ozier-Kalogeropoulos O."/>
            <person name="Pellenz S."/>
            <person name="Potier S."/>
            <person name="Richard G.-F."/>
            <person name="Straub M.-L."/>
            <person name="Suleau A."/>
            <person name="Swennen D."/>
            <person name="Tekaia F."/>
            <person name="Wesolowski-Louvel M."/>
            <person name="Westhof E."/>
            <person name="Wirth B."/>
            <person name="Zeniou-Meyer M."/>
            <person name="Zivanovic Y."/>
            <person name="Bolotin-Fukuhara M."/>
            <person name="Thierry A."/>
            <person name="Bouchier C."/>
            <person name="Caudron B."/>
            <person name="Scarpelli C."/>
            <person name="Gaillardin C."/>
            <person name="Weissenbach J."/>
            <person name="Wincker P."/>
            <person name="Souciet J.-L."/>
        </authorList>
    </citation>
    <scope>NUCLEOTIDE SEQUENCE [LARGE SCALE GENOMIC DNA]</scope>
    <source>
        <strain>CLIB 122 / E 150</strain>
    </source>
</reference>
<feature type="chain" id="PRO_0000229014" description="Acyl-protein thioesterase 1">
    <location>
        <begin position="1"/>
        <end position="227"/>
    </location>
</feature>
<feature type="active site" description="Charge relay system" evidence="1">
    <location>
        <position position="119"/>
    </location>
</feature>
<feature type="active site" description="Charge relay system" evidence="1">
    <location>
        <position position="173"/>
    </location>
</feature>
<feature type="active site" description="Charge relay system" evidence="1">
    <location>
        <position position="207"/>
    </location>
</feature>
<name>APTH1_YARLI</name>
<comment type="function">
    <text evidence="2">Hydrolyzes fatty acids from S-acylated cysteine residues in proteins with a strong preference for palmitoylated G-alpha proteins over other acyl substrates. Mediates the deacylation of G-alpha proteins such as GPA1 in vivo, but has weak or no activity toward palmitoylated Ras proteins. Has weak lysophospholipase activity in vitro; however such activity may not exist in vivo.</text>
</comment>
<comment type="catalytic activity">
    <reaction evidence="2">
        <text>S-hexadecanoyl-L-cysteinyl-[protein] + H2O = L-cysteinyl-[protein] + hexadecanoate + H(+)</text>
        <dbReference type="Rhea" id="RHEA:19233"/>
        <dbReference type="Rhea" id="RHEA-COMP:10131"/>
        <dbReference type="Rhea" id="RHEA-COMP:11032"/>
        <dbReference type="ChEBI" id="CHEBI:7896"/>
        <dbReference type="ChEBI" id="CHEBI:15377"/>
        <dbReference type="ChEBI" id="CHEBI:15378"/>
        <dbReference type="ChEBI" id="CHEBI:29950"/>
        <dbReference type="ChEBI" id="CHEBI:74151"/>
        <dbReference type="EC" id="3.1.2.22"/>
    </reaction>
</comment>
<comment type="subcellular location">
    <subcellularLocation>
        <location evidence="2">Cytoplasm</location>
    </subcellularLocation>
    <subcellularLocation>
        <location evidence="2">Nucleus</location>
    </subcellularLocation>
</comment>
<comment type="similarity">
    <text evidence="3">Belongs to the AB hydrolase superfamily. AB hydrolase 2 family.</text>
</comment>
<evidence type="ECO:0000250" key="1"/>
<evidence type="ECO:0000250" key="2">
    <source>
        <dbReference type="UniProtKB" id="Q12354"/>
    </source>
</evidence>
<evidence type="ECO:0000305" key="3"/>